<organism>
    <name type="scientific">Homo sapiens</name>
    <name type="common">Human</name>
    <dbReference type="NCBI Taxonomy" id="9606"/>
    <lineage>
        <taxon>Eukaryota</taxon>
        <taxon>Metazoa</taxon>
        <taxon>Chordata</taxon>
        <taxon>Craniata</taxon>
        <taxon>Vertebrata</taxon>
        <taxon>Euteleostomi</taxon>
        <taxon>Mammalia</taxon>
        <taxon>Eutheria</taxon>
        <taxon>Euarchontoglires</taxon>
        <taxon>Primates</taxon>
        <taxon>Haplorrhini</taxon>
        <taxon>Catarrhini</taxon>
        <taxon>Hominidae</taxon>
        <taxon>Homo</taxon>
    </lineage>
</organism>
<dbReference type="EC" id="2.4.2.-"/>
<dbReference type="EMBL" id="AL834477">
    <property type="protein sequence ID" value="CAD39136.1"/>
    <property type="molecule type" value="mRNA"/>
</dbReference>
<dbReference type="EMBL" id="BC075801">
    <property type="protein sequence ID" value="AAH75801.1"/>
    <property type="molecule type" value="mRNA"/>
</dbReference>
<dbReference type="EMBL" id="BC105789">
    <property type="protein sequence ID" value="AAI05790.1"/>
    <property type="status" value="ALT_SEQ"/>
    <property type="molecule type" value="mRNA"/>
</dbReference>
<dbReference type="EMBL" id="AK024961">
    <property type="protein sequence ID" value="BAB15044.1"/>
    <property type="molecule type" value="mRNA"/>
</dbReference>
<dbReference type="CCDS" id="CCDS3954.1">
    <molecule id="Q8N3A8-1"/>
</dbReference>
<dbReference type="CCDS" id="CCDS54849.1">
    <molecule id="Q8N3A8-2"/>
</dbReference>
<dbReference type="RefSeq" id="NP_001171526.1">
    <molecule id="Q8N3A8-1"/>
    <property type="nucleotide sequence ID" value="NM_001178055.2"/>
</dbReference>
<dbReference type="RefSeq" id="NP_001171527.1">
    <molecule id="Q8N3A8-2"/>
    <property type="nucleotide sequence ID" value="NM_001178056.2"/>
</dbReference>
<dbReference type="RefSeq" id="NP_078891.2">
    <molecule id="Q8N3A8-1"/>
    <property type="nucleotide sequence ID" value="NM_024615.3"/>
</dbReference>
<dbReference type="RefSeq" id="XP_011541933.1">
    <molecule id="Q8N3A8-1"/>
    <property type="nucleotide sequence ID" value="XM_011543631.4"/>
</dbReference>
<dbReference type="RefSeq" id="XP_011541934.2">
    <property type="nucleotide sequence ID" value="XM_011543632.2"/>
</dbReference>
<dbReference type="RefSeq" id="XP_047273661.1">
    <molecule id="Q8N3A8-2"/>
    <property type="nucleotide sequence ID" value="XM_047417705.1"/>
</dbReference>
<dbReference type="RefSeq" id="XP_054209424.1">
    <molecule id="Q8N3A8-1"/>
    <property type="nucleotide sequence ID" value="XM_054353449.1"/>
</dbReference>
<dbReference type="RefSeq" id="XP_054209427.1">
    <molecule id="Q8N3A8-2"/>
    <property type="nucleotide sequence ID" value="XM_054353452.1"/>
</dbReference>
<dbReference type="BioGRID" id="122793">
    <property type="interactions" value="19"/>
</dbReference>
<dbReference type="FunCoup" id="Q8N3A8">
    <property type="interactions" value="429"/>
</dbReference>
<dbReference type="IntAct" id="Q8N3A8">
    <property type="interactions" value="16"/>
</dbReference>
<dbReference type="MINT" id="Q8N3A8"/>
<dbReference type="STRING" id="9606.ENSP00000281631"/>
<dbReference type="BindingDB" id="Q8N3A8"/>
<dbReference type="ChEMBL" id="CHEMBL3091262"/>
<dbReference type="GlyGen" id="Q8N3A8">
    <property type="glycosylation" value="1 site, 1 O-linked glycan (1 site)"/>
</dbReference>
<dbReference type="iPTMnet" id="Q8N3A8"/>
<dbReference type="PhosphoSitePlus" id="Q8N3A8"/>
<dbReference type="BioMuta" id="PARP8"/>
<dbReference type="DMDM" id="74714811"/>
<dbReference type="MassIVE" id="Q8N3A8"/>
<dbReference type="PaxDb" id="9606-ENSP00000281631"/>
<dbReference type="PeptideAtlas" id="Q8N3A8"/>
<dbReference type="ProteomicsDB" id="71784">
    <molecule id="Q8N3A8-1"/>
</dbReference>
<dbReference type="ProteomicsDB" id="71785">
    <molecule id="Q8N3A8-2"/>
</dbReference>
<dbReference type="Antibodypedia" id="23287">
    <property type="antibodies" value="124 antibodies from 22 providers"/>
</dbReference>
<dbReference type="DNASU" id="79668"/>
<dbReference type="Ensembl" id="ENST00000281631.10">
    <molecule id="Q8N3A8-1"/>
    <property type="protein sequence ID" value="ENSP00000281631.4"/>
    <property type="gene ID" value="ENSG00000151883.20"/>
</dbReference>
<dbReference type="Ensembl" id="ENST00000505697.6">
    <molecule id="Q8N3A8-1"/>
    <property type="protein sequence ID" value="ENSP00000422217.2"/>
    <property type="gene ID" value="ENSG00000151883.20"/>
</dbReference>
<dbReference type="Ensembl" id="ENST00000514067.6">
    <molecule id="Q8N3A8-2"/>
    <property type="protein sequence ID" value="ENSP00000424814.2"/>
    <property type="gene ID" value="ENSG00000151883.20"/>
</dbReference>
<dbReference type="GeneID" id="79668"/>
<dbReference type="KEGG" id="hsa:79668"/>
<dbReference type="MANE-Select" id="ENST00000281631.10">
    <property type="protein sequence ID" value="ENSP00000281631.4"/>
    <property type="RefSeq nucleotide sequence ID" value="NM_024615.4"/>
    <property type="RefSeq protein sequence ID" value="NP_078891.2"/>
</dbReference>
<dbReference type="UCSC" id="uc003jon.5">
    <molecule id="Q8N3A8-1"/>
    <property type="organism name" value="human"/>
</dbReference>
<dbReference type="AGR" id="HGNC:26124"/>
<dbReference type="CTD" id="79668"/>
<dbReference type="DisGeNET" id="79668"/>
<dbReference type="GeneCards" id="PARP8"/>
<dbReference type="HGNC" id="HGNC:26124">
    <property type="gene designation" value="PARP8"/>
</dbReference>
<dbReference type="HPA" id="ENSG00000151883">
    <property type="expression patterns" value="Tissue enhanced (bone)"/>
</dbReference>
<dbReference type="neXtProt" id="NX_Q8N3A8"/>
<dbReference type="OpenTargets" id="ENSG00000151883"/>
<dbReference type="PharmGKB" id="PA134903201"/>
<dbReference type="VEuPathDB" id="HostDB:ENSG00000151883"/>
<dbReference type="eggNOG" id="ENOG502QPRC">
    <property type="taxonomic scope" value="Eukaryota"/>
</dbReference>
<dbReference type="GeneTree" id="ENSGT00950000183129"/>
<dbReference type="HOGENOM" id="CLU_021399_0_0_1"/>
<dbReference type="InParanoid" id="Q8N3A8"/>
<dbReference type="OMA" id="XEYGAID"/>
<dbReference type="OrthoDB" id="109543at2759"/>
<dbReference type="PAN-GO" id="Q8N3A8">
    <property type="GO annotations" value="3 GO annotations based on evolutionary models"/>
</dbReference>
<dbReference type="PhylomeDB" id="Q8N3A8"/>
<dbReference type="TreeFam" id="TF323413"/>
<dbReference type="PathwayCommons" id="Q8N3A8"/>
<dbReference type="Reactome" id="R-HSA-197264">
    <property type="pathway name" value="Nicotinamide salvaging"/>
</dbReference>
<dbReference type="Reactome" id="R-HSA-9683610">
    <property type="pathway name" value="Maturation of nucleoprotein"/>
</dbReference>
<dbReference type="Reactome" id="R-HSA-9694631">
    <property type="pathway name" value="Maturation of nucleoprotein"/>
</dbReference>
<dbReference type="SignaLink" id="Q8N3A8"/>
<dbReference type="BioGRID-ORCS" id="79668">
    <property type="hits" value="6 hits in 1143 CRISPR screens"/>
</dbReference>
<dbReference type="ChiTaRS" id="PARP8">
    <property type="organism name" value="human"/>
</dbReference>
<dbReference type="GeneWiki" id="PARP8"/>
<dbReference type="GenomeRNAi" id="79668"/>
<dbReference type="Pharos" id="Q8N3A8">
    <property type="development level" value="Tbio"/>
</dbReference>
<dbReference type="PRO" id="PR:Q8N3A8"/>
<dbReference type="Proteomes" id="UP000005640">
    <property type="component" value="Chromosome 5"/>
</dbReference>
<dbReference type="RNAct" id="Q8N3A8">
    <property type="molecule type" value="protein"/>
</dbReference>
<dbReference type="Bgee" id="ENSG00000151883">
    <property type="expression patterns" value="Expressed in granulocyte and 174 other cell types or tissues"/>
</dbReference>
<dbReference type="ExpressionAtlas" id="Q8N3A8">
    <property type="expression patterns" value="baseline and differential"/>
</dbReference>
<dbReference type="GO" id="GO:0071782">
    <property type="term" value="C:endoplasmic reticulum tubular network"/>
    <property type="evidence" value="ECO:0000318"/>
    <property type="project" value="GO_Central"/>
</dbReference>
<dbReference type="GO" id="GO:0005635">
    <property type="term" value="C:nuclear envelope"/>
    <property type="evidence" value="ECO:0000318"/>
    <property type="project" value="GO_Central"/>
</dbReference>
<dbReference type="GO" id="GO:0019900">
    <property type="term" value="F:kinase binding"/>
    <property type="evidence" value="ECO:0000318"/>
    <property type="project" value="GO_Central"/>
</dbReference>
<dbReference type="GO" id="GO:0003950">
    <property type="term" value="F:NAD+ poly-ADP-ribosyltransferase activity"/>
    <property type="evidence" value="ECO:0000318"/>
    <property type="project" value="GO_Central"/>
</dbReference>
<dbReference type="GO" id="GO:1990404">
    <property type="term" value="F:NAD+-protein mono-ADP-ribosyltransferase activity"/>
    <property type="evidence" value="ECO:0000314"/>
    <property type="project" value="UniProtKB"/>
</dbReference>
<dbReference type="GO" id="GO:0140803">
    <property type="term" value="F:NAD+-protein-cysteine ADP-ribosyltransferase activity"/>
    <property type="evidence" value="ECO:0007669"/>
    <property type="project" value="RHEA"/>
</dbReference>
<dbReference type="GO" id="GO:0016779">
    <property type="term" value="F:nucleotidyltransferase activity"/>
    <property type="evidence" value="ECO:0007669"/>
    <property type="project" value="UniProtKB-KW"/>
</dbReference>
<dbReference type="GO" id="GO:0043539">
    <property type="term" value="F:protein serine/threonine kinase activator activity"/>
    <property type="evidence" value="ECO:0000318"/>
    <property type="project" value="GO_Central"/>
</dbReference>
<dbReference type="GO" id="GO:0030968">
    <property type="term" value="P:endoplasmic reticulum unfolded protein response"/>
    <property type="evidence" value="ECO:0000318"/>
    <property type="project" value="GO_Central"/>
</dbReference>
<dbReference type="GO" id="GO:0070213">
    <property type="term" value="P:protein auto-ADP-ribosylation"/>
    <property type="evidence" value="ECO:0000314"/>
    <property type="project" value="UniProtKB"/>
</dbReference>
<dbReference type="CDD" id="cd01341">
    <property type="entry name" value="ADP_ribosyl"/>
    <property type="match status" value="2"/>
</dbReference>
<dbReference type="FunFam" id="3.90.228.10:FF:000007">
    <property type="entry name" value="Poly [ADP-ribose] polymerase"/>
    <property type="match status" value="1"/>
</dbReference>
<dbReference type="Gene3D" id="3.90.228.10">
    <property type="match status" value="1"/>
</dbReference>
<dbReference type="InterPro" id="IPR051838">
    <property type="entry name" value="ARTD_PARP"/>
</dbReference>
<dbReference type="InterPro" id="IPR012317">
    <property type="entry name" value="Poly(ADP-ribose)pol_cat_dom"/>
</dbReference>
<dbReference type="PANTHER" id="PTHR21328">
    <property type="entry name" value="POLY ADP-RIBOSE POLYMERASE FAMILY, MEMBER PARP"/>
    <property type="match status" value="1"/>
</dbReference>
<dbReference type="Pfam" id="PF00644">
    <property type="entry name" value="PARP"/>
    <property type="match status" value="1"/>
</dbReference>
<dbReference type="SUPFAM" id="SSF56399">
    <property type="entry name" value="ADP-ribosylation"/>
    <property type="match status" value="1"/>
</dbReference>
<dbReference type="PROSITE" id="PS51059">
    <property type="entry name" value="PARP_CATALYTIC"/>
    <property type="match status" value="1"/>
</dbReference>
<protein>
    <recommendedName>
        <fullName evidence="7">Protein mono-ADP-ribosyltransferase PARP8</fullName>
        <ecNumber>2.4.2.-</ecNumber>
    </recommendedName>
    <alternativeName>
        <fullName evidence="6">ADP-ribosyltransferase diphtheria toxin-like 16</fullName>
        <shortName evidence="6">ARTD16</shortName>
    </alternativeName>
    <alternativeName>
        <fullName evidence="6">Poly [ADP-ribose] polymerase 8</fullName>
        <shortName evidence="6">PARP-8</shortName>
    </alternativeName>
</protein>
<gene>
    <name evidence="6 8" type="primary">PARP8</name>
</gene>
<proteinExistence type="evidence at protein level"/>
<keyword id="KW-0013">ADP-ribosylation</keyword>
<keyword id="KW-0025">Alternative splicing</keyword>
<keyword id="KW-0328">Glycosyltransferase</keyword>
<keyword id="KW-0520">NAD</keyword>
<keyword id="KW-0548">Nucleotidyltransferase</keyword>
<keyword id="KW-1267">Proteomics identification</keyword>
<keyword id="KW-1185">Reference proteome</keyword>
<keyword id="KW-0808">Transferase</keyword>
<accession>Q8N3A8</accession>
<accession>Q3KRB7</accession>
<accession>Q6DHZ1</accession>
<accession>Q9H754</accession>
<name>PARP8_HUMAN</name>
<evidence type="ECO:0000255" key="1">
    <source>
        <dbReference type="PROSITE-ProRule" id="PRU00397"/>
    </source>
</evidence>
<evidence type="ECO:0000256" key="2">
    <source>
        <dbReference type="SAM" id="MobiDB-lite"/>
    </source>
</evidence>
<evidence type="ECO:0000269" key="3">
    <source>
    </source>
</evidence>
<evidence type="ECO:0000269" key="4">
    <source>
    </source>
</evidence>
<evidence type="ECO:0000303" key="5">
    <source>
    </source>
</evidence>
<evidence type="ECO:0000303" key="6">
    <source>
    </source>
</evidence>
<evidence type="ECO:0000305" key="7"/>
<evidence type="ECO:0000312" key="8">
    <source>
        <dbReference type="HGNC" id="HGNC:26124"/>
    </source>
</evidence>
<comment type="function">
    <text evidence="4">Mono-ADP-ribosyltransferase that mediates mono-ADP-ribosylation of target proteins.</text>
</comment>
<comment type="catalytic activity">
    <reaction evidence="4">
        <text>L-cysteinyl-[protein] + NAD(+) = S-(ADP-D-ribosyl)-L-cysteinyl-[protein] + nicotinamide + H(+)</text>
        <dbReference type="Rhea" id="RHEA:56612"/>
        <dbReference type="Rhea" id="RHEA-COMP:10131"/>
        <dbReference type="Rhea" id="RHEA-COMP:14624"/>
        <dbReference type="ChEBI" id="CHEBI:15378"/>
        <dbReference type="ChEBI" id="CHEBI:17154"/>
        <dbReference type="ChEBI" id="CHEBI:29950"/>
        <dbReference type="ChEBI" id="CHEBI:57540"/>
        <dbReference type="ChEBI" id="CHEBI:140607"/>
    </reaction>
    <physiologicalReaction direction="left-to-right" evidence="4">
        <dbReference type="Rhea" id="RHEA:56613"/>
    </physiologicalReaction>
</comment>
<comment type="alternative products">
    <event type="alternative splicing"/>
    <isoform>
        <id>Q8N3A8-1</id>
        <name>1</name>
        <sequence type="displayed"/>
    </isoform>
    <isoform>
        <id>Q8N3A8-2</id>
        <name>2</name>
        <sequence type="described" ref="VSP_020970"/>
    </isoform>
</comment>
<comment type="PTM">
    <text evidence="4">Auto-mono-ADP-ribosylated.</text>
</comment>
<comment type="similarity">
    <text evidence="7">Belongs to the ARTD/PARP family.</text>
</comment>
<comment type="sequence caution" evidence="7">
    <conflict type="miscellaneous discrepancy">
        <sequence resource="EMBL-CDS" id="AAI05790"/>
    </conflict>
    <text>Contaminating sequence. Potential poly-A sequence.</text>
</comment>
<feature type="chain" id="PRO_0000252433" description="Protein mono-ADP-ribosyltransferase PARP8">
    <location>
        <begin position="1"/>
        <end position="854"/>
    </location>
</feature>
<feature type="domain" description="PARP catalytic" evidence="1">
    <location>
        <begin position="617"/>
        <end position="844"/>
    </location>
</feature>
<feature type="region of interest" description="Disordered" evidence="2">
    <location>
        <begin position="113"/>
        <end position="138"/>
    </location>
</feature>
<feature type="region of interest" description="Disordered" evidence="2">
    <location>
        <begin position="291"/>
        <end position="310"/>
    </location>
</feature>
<feature type="region of interest" description="Disordered" evidence="2">
    <location>
        <begin position="750"/>
        <end position="777"/>
    </location>
</feature>
<feature type="compositionally biased region" description="Acidic residues" evidence="2">
    <location>
        <begin position="123"/>
        <end position="135"/>
    </location>
</feature>
<feature type="compositionally biased region" description="Low complexity" evidence="2">
    <location>
        <begin position="760"/>
        <end position="777"/>
    </location>
</feature>
<feature type="modified residue" description="ADP-ribosylcysteine" evidence="4">
    <location>
        <position position="332"/>
    </location>
</feature>
<feature type="modified residue" description="ADP-ribosylcysteine" evidence="4">
    <location>
        <position position="367"/>
    </location>
</feature>
<feature type="modified residue" description="ADP-ribosylcysteine" evidence="4">
    <location>
        <position position="376"/>
    </location>
</feature>
<feature type="modified residue" description="ADP-ribosylcysteine" evidence="4">
    <location>
        <position position="395"/>
    </location>
</feature>
<feature type="splice variant" id="VSP_020970" description="In isoform 2." evidence="5">
    <location>
        <begin position="557"/>
        <end position="598"/>
    </location>
</feature>
<feature type="sequence variant" id="VAR_035853" description="In a colorectal cancer sample; somatic mutation." evidence="3">
    <original>S</original>
    <variation>A</variation>
    <location>
        <position position="777"/>
    </location>
</feature>
<feature type="sequence conflict" description="In Ref. 3; BAB15044." evidence="7" ref="3">
    <original>N</original>
    <variation>D</variation>
    <location>
        <position position="849"/>
    </location>
</feature>
<reference key="1">
    <citation type="journal article" date="2007" name="BMC Genomics">
        <title>The full-ORF clone resource of the German cDNA consortium.</title>
        <authorList>
            <person name="Bechtel S."/>
            <person name="Rosenfelder H."/>
            <person name="Duda A."/>
            <person name="Schmidt C.P."/>
            <person name="Ernst U."/>
            <person name="Wellenreuther R."/>
            <person name="Mehrle A."/>
            <person name="Schuster C."/>
            <person name="Bahr A."/>
            <person name="Bloecker H."/>
            <person name="Heubner D."/>
            <person name="Hoerlein A."/>
            <person name="Michel G."/>
            <person name="Wedler H."/>
            <person name="Koehrer K."/>
            <person name="Ottenwaelder B."/>
            <person name="Poustka A."/>
            <person name="Wiemann S."/>
            <person name="Schupp I."/>
        </authorList>
    </citation>
    <scope>NUCLEOTIDE SEQUENCE [LARGE SCALE MRNA] (ISOFORM 1)</scope>
    <source>
        <tissue>Melanoma</tissue>
    </source>
</reference>
<reference key="2">
    <citation type="journal article" date="2004" name="Genome Res.">
        <title>The status, quality, and expansion of the NIH full-length cDNA project: the Mammalian Gene Collection (MGC).</title>
        <authorList>
            <consortium name="The MGC Project Team"/>
        </authorList>
    </citation>
    <scope>NUCLEOTIDE SEQUENCE [LARGE SCALE MRNA] (ISOFORM 2)</scope>
    <source>
        <tissue>Pancreas</tissue>
        <tissue>Skeletal muscle</tissue>
    </source>
</reference>
<reference key="3">
    <citation type="journal article" date="2004" name="Nat. Genet.">
        <title>Complete sequencing and characterization of 21,243 full-length human cDNAs.</title>
        <authorList>
            <person name="Ota T."/>
            <person name="Suzuki Y."/>
            <person name="Nishikawa T."/>
            <person name="Otsuki T."/>
            <person name="Sugiyama T."/>
            <person name="Irie R."/>
            <person name="Wakamatsu A."/>
            <person name="Hayashi K."/>
            <person name="Sato H."/>
            <person name="Nagai K."/>
            <person name="Kimura K."/>
            <person name="Makita H."/>
            <person name="Sekine M."/>
            <person name="Obayashi M."/>
            <person name="Nishi T."/>
            <person name="Shibahara T."/>
            <person name="Tanaka T."/>
            <person name="Ishii S."/>
            <person name="Yamamoto J."/>
            <person name="Saito K."/>
            <person name="Kawai Y."/>
            <person name="Isono Y."/>
            <person name="Nakamura Y."/>
            <person name="Nagahari K."/>
            <person name="Murakami K."/>
            <person name="Yasuda T."/>
            <person name="Iwayanagi T."/>
            <person name="Wagatsuma M."/>
            <person name="Shiratori A."/>
            <person name="Sudo H."/>
            <person name="Hosoiri T."/>
            <person name="Kaku Y."/>
            <person name="Kodaira H."/>
            <person name="Kondo H."/>
            <person name="Sugawara M."/>
            <person name="Takahashi M."/>
            <person name="Kanda K."/>
            <person name="Yokoi T."/>
            <person name="Furuya T."/>
            <person name="Kikkawa E."/>
            <person name="Omura Y."/>
            <person name="Abe K."/>
            <person name="Kamihara K."/>
            <person name="Katsuta N."/>
            <person name="Sato K."/>
            <person name="Tanikawa M."/>
            <person name="Yamazaki M."/>
            <person name="Ninomiya K."/>
            <person name="Ishibashi T."/>
            <person name="Yamashita H."/>
            <person name="Murakawa K."/>
            <person name="Fujimori K."/>
            <person name="Tanai H."/>
            <person name="Kimata M."/>
            <person name="Watanabe M."/>
            <person name="Hiraoka S."/>
            <person name="Chiba Y."/>
            <person name="Ishida S."/>
            <person name="Ono Y."/>
            <person name="Takiguchi S."/>
            <person name="Watanabe S."/>
            <person name="Yosida M."/>
            <person name="Hotuta T."/>
            <person name="Kusano J."/>
            <person name="Kanehori K."/>
            <person name="Takahashi-Fujii A."/>
            <person name="Hara H."/>
            <person name="Tanase T.-O."/>
            <person name="Nomura Y."/>
            <person name="Togiya S."/>
            <person name="Komai F."/>
            <person name="Hara R."/>
            <person name="Takeuchi K."/>
            <person name="Arita M."/>
            <person name="Imose N."/>
            <person name="Musashino K."/>
            <person name="Yuuki H."/>
            <person name="Oshima A."/>
            <person name="Sasaki N."/>
            <person name="Aotsuka S."/>
            <person name="Yoshikawa Y."/>
            <person name="Matsunawa H."/>
            <person name="Ichihara T."/>
            <person name="Shiohata N."/>
            <person name="Sano S."/>
            <person name="Moriya S."/>
            <person name="Momiyama H."/>
            <person name="Satoh N."/>
            <person name="Takami S."/>
            <person name="Terashima Y."/>
            <person name="Suzuki O."/>
            <person name="Nakagawa S."/>
            <person name="Senoh A."/>
            <person name="Mizoguchi H."/>
            <person name="Goto Y."/>
            <person name="Shimizu F."/>
            <person name="Wakebe H."/>
            <person name="Hishigaki H."/>
            <person name="Watanabe T."/>
            <person name="Sugiyama A."/>
            <person name="Takemoto M."/>
            <person name="Kawakami B."/>
            <person name="Yamazaki M."/>
            <person name="Watanabe K."/>
            <person name="Kumagai A."/>
            <person name="Itakura S."/>
            <person name="Fukuzumi Y."/>
            <person name="Fujimori Y."/>
            <person name="Komiyama M."/>
            <person name="Tashiro H."/>
            <person name="Tanigami A."/>
            <person name="Fujiwara T."/>
            <person name="Ono T."/>
            <person name="Yamada K."/>
            <person name="Fujii Y."/>
            <person name="Ozaki K."/>
            <person name="Hirao M."/>
            <person name="Ohmori Y."/>
            <person name="Kawabata A."/>
            <person name="Hikiji T."/>
            <person name="Kobatake N."/>
            <person name="Inagaki H."/>
            <person name="Ikema Y."/>
            <person name="Okamoto S."/>
            <person name="Okitani R."/>
            <person name="Kawakami T."/>
            <person name="Noguchi S."/>
            <person name="Itoh T."/>
            <person name="Shigeta K."/>
            <person name="Senba T."/>
            <person name="Matsumura K."/>
            <person name="Nakajima Y."/>
            <person name="Mizuno T."/>
            <person name="Morinaga M."/>
            <person name="Sasaki M."/>
            <person name="Togashi T."/>
            <person name="Oyama M."/>
            <person name="Hata H."/>
            <person name="Watanabe M."/>
            <person name="Komatsu T."/>
            <person name="Mizushima-Sugano J."/>
            <person name="Satoh T."/>
            <person name="Shirai Y."/>
            <person name="Takahashi Y."/>
            <person name="Nakagawa K."/>
            <person name="Okumura K."/>
            <person name="Nagase T."/>
            <person name="Nomura N."/>
            <person name="Kikuchi H."/>
            <person name="Masuho Y."/>
            <person name="Yamashita R."/>
            <person name="Nakai K."/>
            <person name="Yada T."/>
            <person name="Nakamura Y."/>
            <person name="Ohara O."/>
            <person name="Isogai T."/>
            <person name="Sugano S."/>
        </authorList>
    </citation>
    <scope>NUCLEOTIDE SEQUENCE [LARGE SCALE MRNA] OF 259-854 (ISOFORM 1)</scope>
    <source>
        <tissue>Colon</tissue>
    </source>
</reference>
<reference key="4">
    <citation type="journal article" date="2010" name="Trends Biochem. Sci.">
        <title>Toward a unified nomenclature for mammalian ADP-ribosyltransferases.</title>
        <authorList>
            <person name="Hottiger M.O."/>
            <person name="Hassa P.O."/>
            <person name="Luscher B."/>
            <person name="Schuler H."/>
            <person name="Koch-Nolte F."/>
        </authorList>
    </citation>
    <scope>NOMENCLATURE</scope>
</reference>
<reference key="5">
    <citation type="journal article" date="2014" name="Nat. Commun.">
        <title>Family-wide analysis of poly(ADP-ribose) polymerase activity.</title>
        <authorList>
            <person name="Vyas S."/>
            <person name="Matic I."/>
            <person name="Uchima L."/>
            <person name="Rood J."/>
            <person name="Zaja R."/>
            <person name="Hay R.T."/>
            <person name="Ahel I."/>
            <person name="Chang P."/>
        </authorList>
    </citation>
    <scope>FUNCTION</scope>
    <scope>CATALYTIC ACTIVITY</scope>
    <scope>ADP-RIBOSYLATION AT CYS-332; CYS-367; CYS-376 AND CYS-395</scope>
</reference>
<reference key="6">
    <citation type="journal article" date="2006" name="Science">
        <title>The consensus coding sequences of human breast and colorectal cancers.</title>
        <authorList>
            <person name="Sjoeblom T."/>
            <person name="Jones S."/>
            <person name="Wood L.D."/>
            <person name="Parsons D.W."/>
            <person name="Lin J."/>
            <person name="Barber T.D."/>
            <person name="Mandelker D."/>
            <person name="Leary R.J."/>
            <person name="Ptak J."/>
            <person name="Silliman N."/>
            <person name="Szabo S."/>
            <person name="Buckhaults P."/>
            <person name="Farrell C."/>
            <person name="Meeh P."/>
            <person name="Markowitz S.D."/>
            <person name="Willis J."/>
            <person name="Dawson D."/>
            <person name="Willson J.K.V."/>
            <person name="Gazdar A.F."/>
            <person name="Hartigan J."/>
            <person name="Wu L."/>
            <person name="Liu C."/>
            <person name="Parmigiani G."/>
            <person name="Park B.H."/>
            <person name="Bachman K.E."/>
            <person name="Papadopoulos N."/>
            <person name="Vogelstein B."/>
            <person name="Kinzler K.W."/>
            <person name="Velculescu V.E."/>
        </authorList>
    </citation>
    <scope>VARIANT [LARGE SCALE ANALYSIS] ALA-777</scope>
</reference>
<sequence length="854" mass="95871">MGMCSRQERIQKDIDVVIQKSRAEKDCLFADFRYSDSTFTFTYVGGPRSVSYSVHVSEDYPDNTYVSSSENDEDVLVTTEPIPVIFHRIATELRKTNDINCCLSIKSKLQKENGEESRQNSTVEEDSEGDNDSEEFYYGGQVNYDGELHKHPQLEADLSAVREIYGPHAVSLREYGAIDDVDIDLHIDVSFLDEEIAVAWEVIRTEPIIVRLHCSLTQYLNGPVPTVDVFQISTKERFGLGHQLKKIMQTFVTQQWKQSKEKSNCLHNKKLSEKKVKSPLHLFSTLRRSPSYPPPGCGKSKSKLKSEQDGISKTHKLLRRTCSSTVKTDDVCVTKSHRTFGRSLSSDPRAEQAMTAIKSHKLLNRPCPAAVKSEECLTLKSHRLLTRSCSGDPRCEHNTNLKPHKLLSRSYSSNLRMEELYGLKNHKLLSKSYSSAPKSSKTELFKEPNAEGRRLSLTSGLIGILTPSSSSSSQLAPNGAKCIPVRDRGFLVQTIEFAEQRIPVLNEYCVVCDEPHVFQNGPMLRPTVCERELCVFAFQTLGVMNEAADEIATGAQVVDLLVSMCRSALESPRKVVIFEPYPSVVDPNDPQMLAFNPRKKNYDRVMKALDSITSIREMTQAPYLEIKKQMDKQDPLAHPLLQWVISSNRSHIVKLPVNRQLKFMHTPHQFLLLSSPPAKESNFRAAKKLFGSTFAFHGSHIENWHSILRNGLVVASNTRLQLHGAMYGSGIYLSPMSSISFGYSGMNKKQKVSAKDEPASSSKSSNTSQSQKKGQQSQFLQSRNLKCIALCEVITSSDLHKHGEIWVVPNTDHVCTRFFFVYEDGQVGDANINTQEGGIHKEILRVIGNQTATG</sequence>